<proteinExistence type="inferred from homology"/>
<name>RNPA_STRPJ</name>
<accession>B8ZPA3</accession>
<comment type="function">
    <text evidence="1">RNaseP catalyzes the removal of the 5'-leader sequence from pre-tRNA to produce the mature 5'-terminus. It can also cleave other RNA substrates such as 4.5S RNA. The protein component plays an auxiliary but essential role in vivo by binding to the 5'-leader sequence and broadening the substrate specificity of the ribozyme.</text>
</comment>
<comment type="catalytic activity">
    <reaction evidence="1">
        <text>Endonucleolytic cleavage of RNA, removing 5'-extranucleotides from tRNA precursor.</text>
        <dbReference type="EC" id="3.1.26.5"/>
    </reaction>
</comment>
<comment type="subunit">
    <text evidence="1">Consists of a catalytic RNA component (M1 or rnpB) and a protein subunit.</text>
</comment>
<comment type="similarity">
    <text evidence="1">Belongs to the RnpA family.</text>
</comment>
<feature type="chain" id="PRO_1000194675" description="Ribonuclease P protein component">
    <location>
        <begin position="1"/>
        <end position="123"/>
    </location>
</feature>
<sequence>MKKNFRVKREKDFKAIFKEGTSFANRKFVVYQLENQKNHFRVGLSVSKKLGNAVTRNQIKRRIRHIIQNAKGSLVEDVDFVVIARKGVETLGYAEMEKNLLHVLKLSKIYREGNGSEKETKVD</sequence>
<protein>
    <recommendedName>
        <fullName evidence="1">Ribonuclease P protein component</fullName>
        <shortName evidence="1">RNase P protein</shortName>
        <shortName evidence="1">RNaseP protein</shortName>
        <ecNumber evidence="1">3.1.26.5</ecNumber>
    </recommendedName>
    <alternativeName>
        <fullName evidence="1">Protein C5</fullName>
    </alternativeName>
</protein>
<evidence type="ECO:0000255" key="1">
    <source>
        <dbReference type="HAMAP-Rule" id="MF_00227"/>
    </source>
</evidence>
<gene>
    <name evidence="1" type="primary">rnpA</name>
    <name type="ordered locus">SPN23F20640</name>
</gene>
<keyword id="KW-0255">Endonuclease</keyword>
<keyword id="KW-0378">Hydrolase</keyword>
<keyword id="KW-0540">Nuclease</keyword>
<keyword id="KW-0694">RNA-binding</keyword>
<keyword id="KW-0819">tRNA processing</keyword>
<organism>
    <name type="scientific">Streptococcus pneumoniae (strain ATCC 700669 / Spain 23F-1)</name>
    <dbReference type="NCBI Taxonomy" id="561276"/>
    <lineage>
        <taxon>Bacteria</taxon>
        <taxon>Bacillati</taxon>
        <taxon>Bacillota</taxon>
        <taxon>Bacilli</taxon>
        <taxon>Lactobacillales</taxon>
        <taxon>Streptococcaceae</taxon>
        <taxon>Streptococcus</taxon>
    </lineage>
</organism>
<reference key="1">
    <citation type="journal article" date="2009" name="J. Bacteriol.">
        <title>Role of conjugative elements in the evolution of the multidrug-resistant pandemic clone Streptococcus pneumoniae Spain23F ST81.</title>
        <authorList>
            <person name="Croucher N.J."/>
            <person name="Walker D."/>
            <person name="Romero P."/>
            <person name="Lennard N."/>
            <person name="Paterson G.K."/>
            <person name="Bason N.C."/>
            <person name="Mitchell A.M."/>
            <person name="Quail M.A."/>
            <person name="Andrew P.W."/>
            <person name="Parkhill J."/>
            <person name="Bentley S.D."/>
            <person name="Mitchell T.J."/>
        </authorList>
    </citation>
    <scope>NUCLEOTIDE SEQUENCE [LARGE SCALE GENOMIC DNA]</scope>
    <source>
        <strain>ATCC 700669 / Spain 23F-1</strain>
    </source>
</reference>
<dbReference type="EC" id="3.1.26.5" evidence="1"/>
<dbReference type="EMBL" id="FM211187">
    <property type="protein sequence ID" value="CAR69810.1"/>
    <property type="molecule type" value="Genomic_DNA"/>
</dbReference>
<dbReference type="RefSeq" id="WP_000739246.1">
    <property type="nucleotide sequence ID" value="NC_011900.1"/>
</dbReference>
<dbReference type="SMR" id="B8ZPA3"/>
<dbReference type="GeneID" id="45652735"/>
<dbReference type="KEGG" id="sne:SPN23F20640"/>
<dbReference type="HOGENOM" id="CLU_117179_9_1_9"/>
<dbReference type="GO" id="GO:0030677">
    <property type="term" value="C:ribonuclease P complex"/>
    <property type="evidence" value="ECO:0007669"/>
    <property type="project" value="TreeGrafter"/>
</dbReference>
<dbReference type="GO" id="GO:0042781">
    <property type="term" value="F:3'-tRNA processing endoribonuclease activity"/>
    <property type="evidence" value="ECO:0007669"/>
    <property type="project" value="TreeGrafter"/>
</dbReference>
<dbReference type="GO" id="GO:0004526">
    <property type="term" value="F:ribonuclease P activity"/>
    <property type="evidence" value="ECO:0007669"/>
    <property type="project" value="UniProtKB-UniRule"/>
</dbReference>
<dbReference type="GO" id="GO:0000049">
    <property type="term" value="F:tRNA binding"/>
    <property type="evidence" value="ECO:0007669"/>
    <property type="project" value="UniProtKB-UniRule"/>
</dbReference>
<dbReference type="GO" id="GO:0001682">
    <property type="term" value="P:tRNA 5'-leader removal"/>
    <property type="evidence" value="ECO:0007669"/>
    <property type="project" value="UniProtKB-UniRule"/>
</dbReference>
<dbReference type="FunFam" id="3.30.230.10:FF:000021">
    <property type="entry name" value="Ribonuclease P protein component"/>
    <property type="match status" value="1"/>
</dbReference>
<dbReference type="Gene3D" id="3.30.230.10">
    <property type="match status" value="1"/>
</dbReference>
<dbReference type="HAMAP" id="MF_00227">
    <property type="entry name" value="RNase_P"/>
    <property type="match status" value="1"/>
</dbReference>
<dbReference type="InterPro" id="IPR020568">
    <property type="entry name" value="Ribosomal_Su5_D2-typ_SF"/>
</dbReference>
<dbReference type="InterPro" id="IPR014721">
    <property type="entry name" value="Ribsml_uS5_D2-typ_fold_subgr"/>
</dbReference>
<dbReference type="InterPro" id="IPR000100">
    <property type="entry name" value="RNase_P"/>
</dbReference>
<dbReference type="InterPro" id="IPR020539">
    <property type="entry name" value="RNase_P_CS"/>
</dbReference>
<dbReference type="NCBIfam" id="TIGR00188">
    <property type="entry name" value="rnpA"/>
    <property type="match status" value="1"/>
</dbReference>
<dbReference type="PANTHER" id="PTHR33992">
    <property type="entry name" value="RIBONUCLEASE P PROTEIN COMPONENT"/>
    <property type="match status" value="1"/>
</dbReference>
<dbReference type="PANTHER" id="PTHR33992:SF1">
    <property type="entry name" value="RIBONUCLEASE P PROTEIN COMPONENT"/>
    <property type="match status" value="1"/>
</dbReference>
<dbReference type="Pfam" id="PF00825">
    <property type="entry name" value="Ribonuclease_P"/>
    <property type="match status" value="1"/>
</dbReference>
<dbReference type="SUPFAM" id="SSF54211">
    <property type="entry name" value="Ribosomal protein S5 domain 2-like"/>
    <property type="match status" value="1"/>
</dbReference>
<dbReference type="PROSITE" id="PS00648">
    <property type="entry name" value="RIBONUCLEASE_P"/>
    <property type="match status" value="1"/>
</dbReference>